<organism>
    <name type="scientific">Rippkaea orientalis (strain PCC 8801 / RF-1)</name>
    <name type="common">Cyanothece sp. (strain PCC 8801)</name>
    <dbReference type="NCBI Taxonomy" id="41431"/>
    <lineage>
        <taxon>Bacteria</taxon>
        <taxon>Bacillati</taxon>
        <taxon>Cyanobacteriota</taxon>
        <taxon>Cyanophyceae</taxon>
        <taxon>Oscillatoriophycideae</taxon>
        <taxon>Chroococcales</taxon>
        <taxon>Aphanothecaceae</taxon>
        <taxon>Rippkaea</taxon>
        <taxon>Rippkaea orientalis</taxon>
    </lineage>
</organism>
<name>HIS8_RIPO1</name>
<feature type="chain" id="PRO_1000135390" description="Histidinol-phosphate aminotransferase">
    <location>
        <begin position="1"/>
        <end position="348"/>
    </location>
</feature>
<feature type="modified residue" description="N6-(pyridoxal phosphate)lysine" evidence="1">
    <location>
        <position position="207"/>
    </location>
</feature>
<comment type="catalytic activity">
    <reaction evidence="1">
        <text>L-histidinol phosphate + 2-oxoglutarate = 3-(imidazol-4-yl)-2-oxopropyl phosphate + L-glutamate</text>
        <dbReference type="Rhea" id="RHEA:23744"/>
        <dbReference type="ChEBI" id="CHEBI:16810"/>
        <dbReference type="ChEBI" id="CHEBI:29985"/>
        <dbReference type="ChEBI" id="CHEBI:57766"/>
        <dbReference type="ChEBI" id="CHEBI:57980"/>
        <dbReference type="EC" id="2.6.1.9"/>
    </reaction>
</comment>
<comment type="cofactor">
    <cofactor evidence="1">
        <name>pyridoxal 5'-phosphate</name>
        <dbReference type="ChEBI" id="CHEBI:597326"/>
    </cofactor>
</comment>
<comment type="pathway">
    <text evidence="1">Amino-acid biosynthesis; L-histidine biosynthesis; L-histidine from 5-phospho-alpha-D-ribose 1-diphosphate: step 7/9.</text>
</comment>
<comment type="subunit">
    <text evidence="1">Homodimer.</text>
</comment>
<comment type="similarity">
    <text evidence="1">Belongs to the class-II pyridoxal-phosphate-dependent aminotransferase family. Histidinol-phosphate aminotransferase subfamily.</text>
</comment>
<accession>B7JUI4</accession>
<reference key="1">
    <citation type="journal article" date="2011" name="MBio">
        <title>Novel metabolic attributes of the genus Cyanothece, comprising a group of unicellular nitrogen-fixing Cyanobacteria.</title>
        <authorList>
            <person name="Bandyopadhyay A."/>
            <person name="Elvitigala T."/>
            <person name="Welsh E."/>
            <person name="Stockel J."/>
            <person name="Liberton M."/>
            <person name="Min H."/>
            <person name="Sherman L.A."/>
            <person name="Pakrasi H.B."/>
        </authorList>
    </citation>
    <scope>NUCLEOTIDE SEQUENCE [LARGE SCALE GENOMIC DNA]</scope>
    <source>
        <strain>PCC 8801 / RF-1</strain>
    </source>
</reference>
<dbReference type="EC" id="2.6.1.9" evidence="1"/>
<dbReference type="EMBL" id="CP001287">
    <property type="protein sequence ID" value="ACK65528.1"/>
    <property type="molecule type" value="Genomic_DNA"/>
</dbReference>
<dbReference type="RefSeq" id="WP_012594801.1">
    <property type="nucleotide sequence ID" value="NC_011726.1"/>
</dbReference>
<dbReference type="SMR" id="B7JUI4"/>
<dbReference type="STRING" id="41431.PCC8801_1472"/>
<dbReference type="KEGG" id="cyp:PCC8801_1472"/>
<dbReference type="eggNOG" id="COG0079">
    <property type="taxonomic scope" value="Bacteria"/>
</dbReference>
<dbReference type="HOGENOM" id="CLU_017584_3_0_3"/>
<dbReference type="OrthoDB" id="9813612at2"/>
<dbReference type="UniPathway" id="UPA00031">
    <property type="reaction ID" value="UER00012"/>
</dbReference>
<dbReference type="Proteomes" id="UP000008204">
    <property type="component" value="Chromosome"/>
</dbReference>
<dbReference type="GO" id="GO:0004400">
    <property type="term" value="F:histidinol-phosphate transaminase activity"/>
    <property type="evidence" value="ECO:0007669"/>
    <property type="project" value="UniProtKB-UniRule"/>
</dbReference>
<dbReference type="GO" id="GO:0030170">
    <property type="term" value="F:pyridoxal phosphate binding"/>
    <property type="evidence" value="ECO:0007669"/>
    <property type="project" value="InterPro"/>
</dbReference>
<dbReference type="GO" id="GO:0000105">
    <property type="term" value="P:L-histidine biosynthetic process"/>
    <property type="evidence" value="ECO:0007669"/>
    <property type="project" value="UniProtKB-UniRule"/>
</dbReference>
<dbReference type="CDD" id="cd00609">
    <property type="entry name" value="AAT_like"/>
    <property type="match status" value="1"/>
</dbReference>
<dbReference type="Gene3D" id="3.90.1150.10">
    <property type="entry name" value="Aspartate Aminotransferase, domain 1"/>
    <property type="match status" value="1"/>
</dbReference>
<dbReference type="Gene3D" id="3.40.640.10">
    <property type="entry name" value="Type I PLP-dependent aspartate aminotransferase-like (Major domain)"/>
    <property type="match status" value="1"/>
</dbReference>
<dbReference type="HAMAP" id="MF_01023">
    <property type="entry name" value="HisC_aminotrans_2"/>
    <property type="match status" value="1"/>
</dbReference>
<dbReference type="InterPro" id="IPR001917">
    <property type="entry name" value="Aminotrans_II_pyridoxalP_BS"/>
</dbReference>
<dbReference type="InterPro" id="IPR004839">
    <property type="entry name" value="Aminotransferase_I/II_large"/>
</dbReference>
<dbReference type="InterPro" id="IPR005861">
    <property type="entry name" value="HisP_aminotrans"/>
</dbReference>
<dbReference type="InterPro" id="IPR015424">
    <property type="entry name" value="PyrdxlP-dep_Trfase"/>
</dbReference>
<dbReference type="InterPro" id="IPR015421">
    <property type="entry name" value="PyrdxlP-dep_Trfase_major"/>
</dbReference>
<dbReference type="InterPro" id="IPR015422">
    <property type="entry name" value="PyrdxlP-dep_Trfase_small"/>
</dbReference>
<dbReference type="NCBIfam" id="TIGR01141">
    <property type="entry name" value="hisC"/>
    <property type="match status" value="1"/>
</dbReference>
<dbReference type="PANTHER" id="PTHR42885:SF2">
    <property type="entry name" value="HISTIDINOL-PHOSPHATE AMINOTRANSFERASE"/>
    <property type="match status" value="1"/>
</dbReference>
<dbReference type="PANTHER" id="PTHR42885">
    <property type="entry name" value="HISTIDINOL-PHOSPHATE AMINOTRANSFERASE-RELATED"/>
    <property type="match status" value="1"/>
</dbReference>
<dbReference type="Pfam" id="PF00155">
    <property type="entry name" value="Aminotran_1_2"/>
    <property type="match status" value="1"/>
</dbReference>
<dbReference type="SUPFAM" id="SSF53383">
    <property type="entry name" value="PLP-dependent transferases"/>
    <property type="match status" value="1"/>
</dbReference>
<dbReference type="PROSITE" id="PS00599">
    <property type="entry name" value="AA_TRANSFER_CLASS_2"/>
    <property type="match status" value="1"/>
</dbReference>
<keyword id="KW-0028">Amino-acid biosynthesis</keyword>
<keyword id="KW-0032">Aminotransferase</keyword>
<keyword id="KW-0368">Histidine biosynthesis</keyword>
<keyword id="KW-0663">Pyridoxal phosphate</keyword>
<keyword id="KW-1185">Reference proteome</keyword>
<keyword id="KW-0808">Transferase</keyword>
<evidence type="ECO:0000255" key="1">
    <source>
        <dbReference type="HAMAP-Rule" id="MF_01023"/>
    </source>
</evidence>
<proteinExistence type="inferred from homology"/>
<sequence length="348" mass="39420">MLPIRECVSQTPGYVPGEQPQTTDYIKLNTNENPYPPPDKIFEGLQQELTKVRLYPDPVSTQLRKAAANVFGISYQNILAGNGSDDILNIAVRTFVNPGEVVAFLDLTYSLYETIARVHGASIVQIPTNNQFELNGPIICPEAKLIFVASPNPPVGKHLNRDYLEETCKQATGVVLIDEAYVDFSDENHLDFLEKYDNVIISRTMSKSYSLAGMRVGFGVSSTEIIEQMDKVRDSYNLDRIAQTLGTAVLNYQDYFKGVWQQVRHTRTRLIESLRTLEFLVFDSDSNFVLASPQWIAASDLYTQLKERKVLVRYFSHPRIKDYVRISIGTDQEIDRLLEAIHEIKGSN</sequence>
<protein>
    <recommendedName>
        <fullName evidence="1">Histidinol-phosphate aminotransferase</fullName>
        <ecNumber evidence="1">2.6.1.9</ecNumber>
    </recommendedName>
    <alternativeName>
        <fullName evidence="1">Imidazole acetol-phosphate transaminase</fullName>
    </alternativeName>
</protein>
<gene>
    <name evidence="1" type="primary">hisC</name>
    <name type="ordered locus">PCC8801_1472</name>
</gene>